<reference key="1">
    <citation type="submission" date="1998-05" db="EMBL/GenBank/DDBJ databases">
        <title>Cloning and sequencing of ampC and ampR genes from Providencia stuartii.</title>
        <authorList>
            <person name="Koeck J.L."/>
            <person name="Basmaciogullari S."/>
            <person name="Parzy D."/>
            <person name="Barnaud G."/>
            <person name="Teyssou R."/>
            <person name="Buisson Y."/>
            <person name="Philippon A."/>
            <person name="Arlet G.J."/>
        </authorList>
    </citation>
    <scope>NUCLEOTIDE SEQUENCE [GENOMIC DNA]</scope>
    <source>
        <strain>VDG 96</strain>
    </source>
</reference>
<organism>
    <name type="scientific">Providencia stuartii</name>
    <dbReference type="NCBI Taxonomy" id="588"/>
    <lineage>
        <taxon>Bacteria</taxon>
        <taxon>Pseudomonadati</taxon>
        <taxon>Pseudomonadota</taxon>
        <taxon>Gammaproteobacteria</taxon>
        <taxon>Enterobacterales</taxon>
        <taxon>Morganellaceae</taxon>
        <taxon>Providencia</taxon>
    </lineage>
</organism>
<sequence>MSGNYRHRLPLNALRAFEASARHLSFTRAGLELNVTQAAVSQQVRLLEEQLGLELFIRLPRGLALTDEGLALLPVLSRSFDQIESLLQQFEDGHYHEVLSVSVVGTFAVGWLLPRLPAFAALYPYIDLRIMTHNNVVNLAAEGVDFAIRFGEGLWPLAENTALFSAAHTVLCSEKVANKLTHPLDLKDHSLMRSYRKDEWEKWQIAAELEPWRVKGPIFDSSRLMVEAALLTDGVALAPSCMFEHELSAGTLVQPFDISVTLGGYWLSRLKSRPTTPAMAIFRHWLLAEVQK</sequence>
<accession>O69772</accession>
<proteinExistence type="inferred from homology"/>
<protein>
    <recommendedName>
        <fullName>HTH-type transcriptional activator AmpR</fullName>
    </recommendedName>
</protein>
<keyword id="KW-0010">Activator</keyword>
<keyword id="KW-0963">Cytoplasm</keyword>
<keyword id="KW-0238">DNA-binding</keyword>
<keyword id="KW-0804">Transcription</keyword>
<keyword id="KW-0805">Transcription regulation</keyword>
<name>AMPR_PROST</name>
<comment type="function">
    <text>This protein is a positive regulator of gene expression of beta-lactamase (AmpC).</text>
</comment>
<comment type="subcellular location">
    <subcellularLocation>
        <location evidence="1">Cytoplasm</location>
    </subcellularLocation>
</comment>
<comment type="similarity">
    <text evidence="3">Belongs to the LysR transcriptional regulatory family.</text>
</comment>
<evidence type="ECO:0000250" key="1"/>
<evidence type="ECO:0000255" key="2">
    <source>
        <dbReference type="PROSITE-ProRule" id="PRU00253"/>
    </source>
</evidence>
<evidence type="ECO:0000305" key="3"/>
<feature type="chain" id="PRO_0000105588" description="HTH-type transcriptional activator AmpR">
    <location>
        <begin position="1"/>
        <end position="292"/>
    </location>
</feature>
<feature type="domain" description="HTH lysR-type" evidence="2">
    <location>
        <begin position="9"/>
        <end position="66"/>
    </location>
</feature>
<feature type="DNA-binding region" description="H-T-H motif" evidence="2">
    <location>
        <begin position="26"/>
        <end position="45"/>
    </location>
</feature>
<gene>
    <name type="primary">ampR</name>
</gene>
<dbReference type="EMBL" id="Y17315">
    <property type="protein sequence ID" value="CAA76738.1"/>
    <property type="molecule type" value="Genomic_DNA"/>
</dbReference>
<dbReference type="RefSeq" id="WP_014657004.1">
    <property type="nucleotide sequence ID" value="NZ_WLUK01000057.1"/>
</dbReference>
<dbReference type="SMR" id="O69772"/>
<dbReference type="STRING" id="588.BGK56_12155"/>
<dbReference type="OMA" id="TNNNRVD"/>
<dbReference type="GO" id="GO:0005737">
    <property type="term" value="C:cytoplasm"/>
    <property type="evidence" value="ECO:0007669"/>
    <property type="project" value="UniProtKB-SubCell"/>
</dbReference>
<dbReference type="GO" id="GO:0003700">
    <property type="term" value="F:DNA-binding transcription factor activity"/>
    <property type="evidence" value="ECO:0007669"/>
    <property type="project" value="InterPro"/>
</dbReference>
<dbReference type="GO" id="GO:0043565">
    <property type="term" value="F:sequence-specific DNA binding"/>
    <property type="evidence" value="ECO:0007669"/>
    <property type="project" value="TreeGrafter"/>
</dbReference>
<dbReference type="GO" id="GO:0006351">
    <property type="term" value="P:DNA-templated transcription"/>
    <property type="evidence" value="ECO:0007669"/>
    <property type="project" value="TreeGrafter"/>
</dbReference>
<dbReference type="FunFam" id="1.10.10.10:FF:000038">
    <property type="entry name" value="Glycine cleavage system transcriptional activator"/>
    <property type="match status" value="1"/>
</dbReference>
<dbReference type="Gene3D" id="3.40.190.10">
    <property type="entry name" value="Periplasmic binding protein-like II"/>
    <property type="match status" value="2"/>
</dbReference>
<dbReference type="Gene3D" id="1.10.10.10">
    <property type="entry name" value="Winged helix-like DNA-binding domain superfamily/Winged helix DNA-binding domain"/>
    <property type="match status" value="1"/>
</dbReference>
<dbReference type="InterPro" id="IPR005119">
    <property type="entry name" value="LysR_subst-bd"/>
</dbReference>
<dbReference type="InterPro" id="IPR000847">
    <property type="entry name" value="Tscrpt_reg_HTH_LysR"/>
</dbReference>
<dbReference type="InterPro" id="IPR036388">
    <property type="entry name" value="WH-like_DNA-bd_sf"/>
</dbReference>
<dbReference type="InterPro" id="IPR036390">
    <property type="entry name" value="WH_DNA-bd_sf"/>
</dbReference>
<dbReference type="PANTHER" id="PTHR30537:SF70">
    <property type="entry name" value="HTH-TYPE TRANSCRIPTIONAL ACTIVATOR AMPR"/>
    <property type="match status" value="1"/>
</dbReference>
<dbReference type="PANTHER" id="PTHR30537">
    <property type="entry name" value="HTH-TYPE TRANSCRIPTIONAL REGULATOR"/>
    <property type="match status" value="1"/>
</dbReference>
<dbReference type="Pfam" id="PF00126">
    <property type="entry name" value="HTH_1"/>
    <property type="match status" value="1"/>
</dbReference>
<dbReference type="Pfam" id="PF03466">
    <property type="entry name" value="LysR_substrate"/>
    <property type="match status" value="1"/>
</dbReference>
<dbReference type="PRINTS" id="PR00039">
    <property type="entry name" value="HTHLYSR"/>
</dbReference>
<dbReference type="SUPFAM" id="SSF53850">
    <property type="entry name" value="Periplasmic binding protein-like II"/>
    <property type="match status" value="1"/>
</dbReference>
<dbReference type="SUPFAM" id="SSF46785">
    <property type="entry name" value="Winged helix' DNA-binding domain"/>
    <property type="match status" value="1"/>
</dbReference>
<dbReference type="PROSITE" id="PS50931">
    <property type="entry name" value="HTH_LYSR"/>
    <property type="match status" value="1"/>
</dbReference>